<proteinExistence type="evidence at transcript level"/>
<dbReference type="EMBL" id="KT271471">
    <property type="protein sequence ID" value="AKQ49200.1"/>
    <property type="molecule type" value="mRNA"/>
</dbReference>
<dbReference type="SMR" id="A0A0N7D7C9"/>
<dbReference type="GlyCosmos" id="A0A0N7D7C9">
    <property type="glycosylation" value="1 site, No reported glycans"/>
</dbReference>
<dbReference type="GO" id="GO:0005886">
    <property type="term" value="C:plasma membrane"/>
    <property type="evidence" value="ECO:0007669"/>
    <property type="project" value="UniProtKB-SubCell"/>
</dbReference>
<dbReference type="GO" id="GO:0022857">
    <property type="term" value="F:transmembrane transporter activity"/>
    <property type="evidence" value="ECO:0007669"/>
    <property type="project" value="InterPro"/>
</dbReference>
<dbReference type="CDD" id="cd17502">
    <property type="entry name" value="MFS_Azr1_MDR_like"/>
    <property type="match status" value="1"/>
</dbReference>
<dbReference type="Gene3D" id="1.20.1250.20">
    <property type="entry name" value="MFS general substrate transporter like domains"/>
    <property type="match status" value="1"/>
</dbReference>
<dbReference type="Gene3D" id="1.20.1720.10">
    <property type="entry name" value="Multidrug resistance protein D"/>
    <property type="match status" value="1"/>
</dbReference>
<dbReference type="InterPro" id="IPR011701">
    <property type="entry name" value="MFS"/>
</dbReference>
<dbReference type="InterPro" id="IPR020846">
    <property type="entry name" value="MFS_dom"/>
</dbReference>
<dbReference type="InterPro" id="IPR036259">
    <property type="entry name" value="MFS_trans_sf"/>
</dbReference>
<dbReference type="PANTHER" id="PTHR23501">
    <property type="entry name" value="MAJOR FACILITATOR SUPERFAMILY"/>
    <property type="match status" value="1"/>
</dbReference>
<dbReference type="PANTHER" id="PTHR23501:SF177">
    <property type="entry name" value="MAJOR FACILITATOR SUPERFAMILY (MFS) PROFILE DOMAIN-CONTAINING PROTEIN-RELATED"/>
    <property type="match status" value="1"/>
</dbReference>
<dbReference type="Pfam" id="PF07690">
    <property type="entry name" value="MFS_1"/>
    <property type="match status" value="1"/>
</dbReference>
<dbReference type="SUPFAM" id="SSF103473">
    <property type="entry name" value="MFS general substrate transporter"/>
    <property type="match status" value="1"/>
</dbReference>
<dbReference type="PROSITE" id="PS50850">
    <property type="entry name" value="MFS"/>
    <property type="match status" value="1"/>
</dbReference>
<protein>
    <recommendedName>
        <fullName evidence="5">Dehydrocurvularin exporter</fullName>
    </recommendedName>
    <alternativeName>
        <fullName evidence="5">Dehydrocurvularin biosynthesis protein 2</fullName>
    </alternativeName>
</protein>
<accession>A0A0N7D7C9</accession>
<gene>
    <name evidence="5" type="primary">Dhc2</name>
</gene>
<feature type="chain" id="PRO_0000438395" description="Dehydrocurvularin exporter">
    <location>
        <begin position="1"/>
        <end position="581"/>
    </location>
</feature>
<feature type="transmembrane region" description="Helical" evidence="1">
    <location>
        <begin position="61"/>
        <end position="81"/>
    </location>
</feature>
<feature type="transmembrane region" description="Helical" evidence="1">
    <location>
        <begin position="96"/>
        <end position="116"/>
    </location>
</feature>
<feature type="transmembrane region" description="Helical" evidence="1">
    <location>
        <begin position="126"/>
        <end position="146"/>
    </location>
</feature>
<feature type="transmembrane region" description="Helical" evidence="1">
    <location>
        <begin position="159"/>
        <end position="179"/>
    </location>
</feature>
<feature type="transmembrane region" description="Helical" evidence="1">
    <location>
        <begin position="184"/>
        <end position="204"/>
    </location>
</feature>
<feature type="transmembrane region" description="Helical" evidence="1">
    <location>
        <begin position="215"/>
        <end position="235"/>
    </location>
</feature>
<feature type="transmembrane region" description="Helical" evidence="1">
    <location>
        <begin position="251"/>
        <end position="271"/>
    </location>
</feature>
<feature type="transmembrane region" description="Helical" evidence="1">
    <location>
        <begin position="288"/>
        <end position="308"/>
    </location>
</feature>
<feature type="transmembrane region" description="Helical" evidence="1">
    <location>
        <begin position="330"/>
        <end position="350"/>
    </location>
</feature>
<feature type="transmembrane region" description="Helical" evidence="1">
    <location>
        <begin position="363"/>
        <end position="383"/>
    </location>
</feature>
<feature type="transmembrane region" description="Helical" evidence="1">
    <location>
        <begin position="392"/>
        <end position="412"/>
    </location>
</feature>
<feature type="transmembrane region" description="Helical" evidence="1">
    <location>
        <begin position="424"/>
        <end position="444"/>
    </location>
</feature>
<feature type="transmembrane region" description="Helical" evidence="1">
    <location>
        <begin position="456"/>
        <end position="476"/>
    </location>
</feature>
<feature type="transmembrane region" description="Helical" evidence="1">
    <location>
        <begin position="527"/>
        <end position="547"/>
    </location>
</feature>
<feature type="region of interest" description="Disordered" evidence="3">
    <location>
        <begin position="1"/>
        <end position="47"/>
    </location>
</feature>
<feature type="region of interest" description="Disordered" evidence="3">
    <location>
        <begin position="552"/>
        <end position="581"/>
    </location>
</feature>
<feature type="compositionally biased region" description="Polar residues" evidence="3">
    <location>
        <begin position="1"/>
        <end position="10"/>
    </location>
</feature>
<feature type="compositionally biased region" description="Basic and acidic residues" evidence="3">
    <location>
        <begin position="24"/>
        <end position="39"/>
    </location>
</feature>
<feature type="compositionally biased region" description="Basic and acidic residues" evidence="3">
    <location>
        <begin position="565"/>
        <end position="581"/>
    </location>
</feature>
<feature type="glycosylation site" description="N-linked (GlcNAc...) asparagine" evidence="2">
    <location>
        <position position="11"/>
    </location>
</feature>
<sequence length="581" mass="62369">MTDSPSLESNNKSDMDTPRPPASSHDEHDAAESVSEKQDSATTSPTGKLEPEYLTGLRLGLVMFTIFVSTILVSLEIGIIATAIPGITNDFRKLDDVGWYGSATFILAAAASPLWGKLYKYLNVKWVYLSAVGIFLVGSIVAAAAPNSVAVIVGRALQGWGASGVLGGTLIVINYVAPPRNHPLLIGTWMAVFMMSTILGPVIGGAFTSGVSWRWCFWINLPVGGPIVVLLLLFLRVPKHVKPVPATWKEIILNLDIPGFCLLLVSLVCLTLALQWGGQTKTWDDGSVIATLVLWILLTIGFFIVEWLQGARAMAPLSILKQRMTWSNVIFCLVSYAALYQVMFYLPIYFQSIHGQSAVTSGVNTLPFLAFFALGAMVSGGAIGKTRYTQPYELAGALIMTAGMALIYILDVDSPKAKYIGAEVLFGFGIGLCNQVPMTAVQGFSKPDEVASATGIMVMCQTLSGAYFVAIAQSLFANRMLHALNSGSDHLDVALVLGTGASELQDVFSGDDLTAVIDAYMVGIKDVFAFSLACAAFSVILTALIPFKRLPDHEKKPSKDAMASDEVKASEEVQQEKKVTV</sequence>
<name>DHC2_ALTCI</name>
<comment type="function">
    <text evidence="4">Efflux pump that is probably involved in the export of dehydrocurvularin (PubMed:26493380).</text>
</comment>
<comment type="subcellular location">
    <subcellularLocation>
        <location evidence="7">Cell membrane</location>
        <topology evidence="1">Multi-pass membrane protein</topology>
    </subcellularLocation>
</comment>
<comment type="similarity">
    <text evidence="6">Belongs to the major facilitator superfamily. TCR/Tet family.</text>
</comment>
<organism>
    <name type="scientific">Alternaria cinerariae</name>
    <dbReference type="NCBI Taxonomy" id="216837"/>
    <lineage>
        <taxon>Eukaryota</taxon>
        <taxon>Fungi</taxon>
        <taxon>Dikarya</taxon>
        <taxon>Ascomycota</taxon>
        <taxon>Pezizomycotina</taxon>
        <taxon>Dothideomycetes</taxon>
        <taxon>Pleosporomycetidae</taxon>
        <taxon>Pleosporales</taxon>
        <taxon>Pleosporineae</taxon>
        <taxon>Pleosporaceae</taxon>
        <taxon>Alternaria</taxon>
        <taxon>Alternaria sect. Sonchi</taxon>
    </lineage>
</organism>
<evidence type="ECO:0000255" key="1"/>
<evidence type="ECO:0000255" key="2">
    <source>
        <dbReference type="PROSITE-ProRule" id="PRU00498"/>
    </source>
</evidence>
<evidence type="ECO:0000256" key="3">
    <source>
        <dbReference type="SAM" id="MobiDB-lite"/>
    </source>
</evidence>
<evidence type="ECO:0000269" key="4">
    <source>
    </source>
</evidence>
<evidence type="ECO:0000303" key="5">
    <source>
    </source>
</evidence>
<evidence type="ECO:0000305" key="6"/>
<evidence type="ECO:0000305" key="7">
    <source>
    </source>
</evidence>
<reference key="1">
    <citation type="journal article" date="2015" name="ChemBioChem">
        <title>Comparison of 10,11-dehydrocurvularin polyketide synthases from Alternaria cinerariae and Aspergillus terreus highlights key structural motifs.</title>
        <authorList>
            <person name="Cochrane R.V."/>
            <person name="Gao Z."/>
            <person name="Lambkin G.R."/>
            <person name="Xu W."/>
            <person name="Winter J.M."/>
            <person name="Marcus S.L."/>
            <person name="Tang Y."/>
            <person name="Vederas J.C."/>
        </authorList>
    </citation>
    <scope>NUCLEOTIDE SEQUENCE [MRNA]</scope>
    <scope>FUNCTION</scope>
    <source>
        <strain>ATCC 11784</strain>
    </source>
</reference>
<reference key="2">
    <citation type="submission" date="2015-07" db="EMBL/GenBank/DDBJ databases">
        <authorList>
            <person name="Cajimat M.N.B."/>
            <person name="Milazzo M.L."/>
            <person name="Fulhorst C.F."/>
        </authorList>
    </citation>
    <scope>NUCLEOTIDE SEQUENCE [MRNA]</scope>
    <source>
        <strain>ATCC 11784</strain>
    </source>
</reference>
<keyword id="KW-1003">Cell membrane</keyword>
<keyword id="KW-0325">Glycoprotein</keyword>
<keyword id="KW-0472">Membrane</keyword>
<keyword id="KW-0812">Transmembrane</keyword>
<keyword id="KW-1133">Transmembrane helix</keyword>
<keyword id="KW-0813">Transport</keyword>